<sequence length="885" mass="97151">MLSRLFRMHGLFVASHPWEVIVGTVTLTICMMSMNMFTGNDKICGWNYECPKFEEDVLSSDIIILTITRCIAILYIYFQFQNLRQLGSKYILGIAGLFTIFSSFVFSTVVIHFLDKELTGLNEALPFFLLLIDLSRASALAKFALSSNSQDEVRENIARGMAILGPTFTLDALVECLVIGVGTMSGVRQLEIMCCFGCMSVLATYFVFMTFFPACVSLVLELSRESREGRPIWQLSHFARVLEGEENKPNPVTQRVKIIMSLGLVLVHAHSRWIADPSPQNSTADNSKVSLGLDENVSKRIEPSVSLWQFYLSKMISMDIEQVITLTLALLLAVKYIFFEQAETESTLSLKNPITSPVVTQKKVTDDCCRREPTLVRNDQKFHTVEEEARINRERKVEVIKPLVAETDTSSRPTFVVGNSTLDSSLELEMQEPEIQIPSEPRPNEECLQILGNAEKGAKFLSDAEIIQLVNAKHIPAYKLETLMETHERGVSIRRQLLSKKLPEPSSLQYLPYRDYNYSLVMGACCENVIGYMPIPVGVAGPLCLDGKEFQVPMATTEGCLVASTNRGCRAIGLGGGASSRILADGMTPVVRFPRACDSAEVKAWLETPEGFAVIKEAFDSTSRFARLQKLQMSVAGRNLYIRFQSRSGDAMGMNMISKGTEKALSKLHEYFPEMQILAVSGNYCTDKKPAAVNWIEGRGKSVVCEAVIPAKVVREVLKTTTEAMVEVNINKNLVGSAMAGSIGGYNAHAANIVTAIYIACGQDAAQNVGSSNCITLMEASGPTNEDLYISCTMPSIEIGTVGGGTSLLPQQACLQMLGVQGACKDNPGENARQLARIVCGTVMAGELSLMAALAAGHLVRSHMIHNRSKINLQDLQGTCTKKAA</sequence>
<proteinExistence type="evidence at transcript level"/>
<keyword id="KW-0152">Cholesterol biosynthesis</keyword>
<keyword id="KW-0153">Cholesterol metabolism</keyword>
<keyword id="KW-0256">Endoplasmic reticulum</keyword>
<keyword id="KW-0325">Glycoprotein</keyword>
<keyword id="KW-1017">Isopeptide bond</keyword>
<keyword id="KW-0444">Lipid biosynthesis</keyword>
<keyword id="KW-0443">Lipid metabolism</keyword>
<keyword id="KW-0472">Membrane</keyword>
<keyword id="KW-0521">NADP</keyword>
<keyword id="KW-0560">Oxidoreductase</keyword>
<keyword id="KW-0576">Peroxisome</keyword>
<keyword id="KW-0597">Phosphoprotein</keyword>
<keyword id="KW-1185">Reference proteome</keyword>
<keyword id="KW-0752">Steroid biosynthesis</keyword>
<keyword id="KW-0753">Steroid metabolism</keyword>
<keyword id="KW-0756">Sterol biosynthesis</keyword>
<keyword id="KW-1207">Sterol metabolism</keyword>
<keyword id="KW-0812">Transmembrane</keyword>
<keyword id="KW-1133">Transmembrane helix</keyword>
<keyword id="KW-0832">Ubl conjugation</keyword>
<comment type="function">
    <text evidence="2">Catalyzes the conversion of (3S)-hydroxy-3-methylglutaryl-CoA (HMG-CoA) to mevalonic acid, the rate-limiting step in the synthesis of cholesterol and other isoprenoids, thus plays a critical role in cellular cholesterol homeostasis.</text>
</comment>
<comment type="catalytic activity">
    <reaction evidence="2">
        <text>(R)-mevalonate + 2 NADP(+) + CoA = (3S)-3-hydroxy-3-methylglutaryl-CoA + 2 NADPH + 2 H(+)</text>
        <dbReference type="Rhea" id="RHEA:15989"/>
        <dbReference type="ChEBI" id="CHEBI:15378"/>
        <dbReference type="ChEBI" id="CHEBI:36464"/>
        <dbReference type="ChEBI" id="CHEBI:43074"/>
        <dbReference type="ChEBI" id="CHEBI:57287"/>
        <dbReference type="ChEBI" id="CHEBI:57783"/>
        <dbReference type="ChEBI" id="CHEBI:58349"/>
        <dbReference type="EC" id="1.1.1.34"/>
    </reaction>
    <physiologicalReaction direction="right-to-left" evidence="2">
        <dbReference type="Rhea" id="RHEA:15991"/>
    </physiologicalReaction>
</comment>
<comment type="activity regulation">
    <text evidence="1 2">Regulated by a negative feedback mechanism through sterols and non-sterol metabolites derived from mevalonate (By similarity). Phosphorylation at Ser-869 down-regulates the catalytic activity (By similarity).</text>
</comment>
<comment type="pathway">
    <text>Metabolic intermediate biosynthesis; (R)-mevalonate biosynthesis; (R)-mevalonate from acetyl-CoA: step 3/3.</text>
</comment>
<comment type="subunit">
    <text evidence="2">Homotetramer. Homodimer. Interacts (via its SSD) with INSIG1; the interaction, accelerated by sterols, leads to the recruitment of HMGCR to AMFR/gp78 for its ubiquitination by the sterol-mediated ERAD pathway. Interacts with UBIAD1.</text>
</comment>
<comment type="subcellular location">
    <subcellularLocation>
        <location evidence="2">Endoplasmic reticulum membrane</location>
        <topology evidence="1">Multi-pass membrane protein</topology>
    </subcellularLocation>
    <subcellularLocation>
        <location evidence="2">Peroxisome membrane</location>
        <topology evidence="1">Multi-pass membrane protein</topology>
    </subcellularLocation>
</comment>
<comment type="tissue specificity">
    <text evidence="7">High expression found in liver, heart, kidney, bladder and subcutaneous fat. Lower levels in lung, uterus and large intestine. Lowest levels in cerebrum, spleen, spinal cord, stomach, ovary, longissimus muscle, and small intestine.</text>
</comment>
<comment type="PTM">
    <text evidence="2">Undergoes sterol-mediated ubiquitination and ER-associated degradation (ERAD). Accumulation of sterols in the endoplasmic reticulum (ER) membrane, triggers binding of the reductase to the ER membrane protein INSIG1 or INSIG2. The INSIG1 binding leads to the recruitment of the ubiquitin ligase, AMFR/gp78, RNF139 or RNF145, initiating ubiquitination of the reductase. The ubiquitinated reductase is then extracted from the ER membrane and delivered to cytosolic 26S proteosomes by a mechanism probably mediated by the ATPase Valosin-containing protein VCP/p97. The INSIG2-binding leads to the recruitment of the ubiquitin ligase RNF139, initiating ubiquitination of the reductase. Lys-248 is the main site of ubiquitination. Ubiquitination is enhanced by the presence of a geranylgeranylated protein.</text>
</comment>
<comment type="PTM">
    <text evidence="2">N-glycosylated. Deglycosylated by NGLY1 on release from the endoplasmic reticulum (ER) in a sterol-mediated manner.</text>
</comment>
<comment type="PTM">
    <text evidence="1">Phosphorylated. Phosphorylation at Ser-869 reduces the catalytic activity.</text>
</comment>
<comment type="similarity">
    <text evidence="8">Belongs to the HMG-CoA reductase family.</text>
</comment>
<accession>Q1W675</accession>
<feature type="chain" id="PRO_0000258020" description="3-hydroxy-3-methylglutaryl-coenzyme A reductase">
    <location>
        <begin position="1"/>
        <end position="885"/>
    </location>
</feature>
<feature type="topological domain" description="Cytoplasmic" evidence="1">
    <location>
        <begin position="1"/>
        <end position="9"/>
    </location>
</feature>
<feature type="transmembrane region" description="Helical" evidence="1">
    <location>
        <begin position="10"/>
        <end position="39"/>
    </location>
</feature>
<feature type="topological domain" description="Lumenal" evidence="1">
    <location>
        <begin position="40"/>
        <end position="56"/>
    </location>
</feature>
<feature type="transmembrane region" description="Helical" evidence="1">
    <location>
        <begin position="57"/>
        <end position="78"/>
    </location>
</feature>
<feature type="topological domain" description="Cytoplasmic" evidence="1">
    <location>
        <begin position="79"/>
        <end position="89"/>
    </location>
</feature>
<feature type="transmembrane region" description="Helical" evidence="1">
    <location>
        <begin position="90"/>
        <end position="114"/>
    </location>
</feature>
<feature type="topological domain" description="Lumenal" evidence="1">
    <location>
        <begin position="115"/>
        <end position="123"/>
    </location>
</feature>
<feature type="transmembrane region" description="Helical" evidence="1">
    <location>
        <begin position="124"/>
        <end position="149"/>
    </location>
</feature>
<feature type="topological domain" description="Cytoplasmic" evidence="1">
    <location>
        <begin position="150"/>
        <end position="159"/>
    </location>
</feature>
<feature type="transmembrane region" description="Helical" evidence="1">
    <location>
        <begin position="160"/>
        <end position="187"/>
    </location>
</feature>
<feature type="topological domain" description="Lumenal" evidence="1">
    <location>
        <begin position="188"/>
        <end position="191"/>
    </location>
</feature>
<feature type="transmembrane region" description="Helical" evidence="1">
    <location>
        <begin position="192"/>
        <end position="220"/>
    </location>
</feature>
<feature type="topological domain" description="Cytoplasmic" evidence="1">
    <location>
        <begin position="221"/>
        <end position="248"/>
    </location>
</feature>
<feature type="transmembrane region" description="Helical" evidence="1">
    <location>
        <begin position="249"/>
        <end position="275"/>
    </location>
</feature>
<feature type="topological domain" description="Lumenal" evidence="1">
    <location>
        <begin position="276"/>
        <end position="314"/>
    </location>
</feature>
<feature type="transmembrane region" description="Helical" evidence="1">
    <location>
        <begin position="315"/>
        <end position="339"/>
    </location>
</feature>
<feature type="topological domain" description="Cytoplasmic" evidence="1">
    <location>
        <begin position="340"/>
        <end position="885"/>
    </location>
</feature>
<feature type="domain" description="SSD" evidence="5">
    <location>
        <begin position="61"/>
        <end position="218"/>
    </location>
</feature>
<feature type="short sequence motif" description="INSIG-binding motif" evidence="2">
    <location>
        <begin position="75"/>
        <end position="78"/>
    </location>
</feature>
<feature type="active site" description="Charge relay system" evidence="2">
    <location>
        <position position="558"/>
    </location>
</feature>
<feature type="active site" description="Charge relay system" evidence="2">
    <location>
        <position position="688"/>
    </location>
</feature>
<feature type="active site" description="Charge relay system" evidence="2">
    <location>
        <position position="764"/>
    </location>
</feature>
<feature type="active site" description="Proton donor" evidence="6">
    <location>
        <position position="863"/>
    </location>
</feature>
<feature type="modified residue" description="Phosphoserine; by AMPK" evidence="3">
    <location>
        <position position="869"/>
    </location>
</feature>
<feature type="glycosylation site" description="N-linked (GlcNAc...) asparagine" evidence="4">
    <location>
        <position position="281"/>
    </location>
</feature>
<feature type="glycosylation site" description="N-linked (GlcNAc...) asparagine" evidence="4">
    <location>
        <position position="296"/>
    </location>
</feature>
<feature type="cross-link" description="Glycyl lysine isopeptide (Lys-Gly) (interchain with G-Cter in ubiquitin)" evidence="1">
    <location>
        <position position="89"/>
    </location>
</feature>
<feature type="cross-link" description="Glycyl lysine isopeptide (Lys-Gly) (interchain with G-Cter in ubiquitin)" evidence="1">
    <location>
        <position position="248"/>
    </location>
</feature>
<dbReference type="EC" id="1.1.1.34" evidence="2"/>
<dbReference type="EMBL" id="DQ531631">
    <property type="protein sequence ID" value="ABF83891.1"/>
    <property type="molecule type" value="Genomic_DNA"/>
</dbReference>
<dbReference type="EMBL" id="DQ432054">
    <property type="protein sequence ID" value="ABD96089.1"/>
    <property type="molecule type" value="mRNA"/>
</dbReference>
<dbReference type="RefSeq" id="NP_001116460.1">
    <property type="nucleotide sequence ID" value="NM_001122988.1"/>
</dbReference>
<dbReference type="SMR" id="Q1W675"/>
<dbReference type="FunCoup" id="Q1W675">
    <property type="interactions" value="786"/>
</dbReference>
<dbReference type="STRING" id="9823.ENSSSCP00000053515"/>
<dbReference type="BindingDB" id="Q1W675"/>
<dbReference type="ChEMBL" id="CHEMBL3593154"/>
<dbReference type="DrugCentral" id="Q1W675"/>
<dbReference type="GlyCosmos" id="Q1W675">
    <property type="glycosylation" value="2 sites, No reported glycans"/>
</dbReference>
<dbReference type="GlyGen" id="Q1W675">
    <property type="glycosylation" value="2 sites"/>
</dbReference>
<dbReference type="iPTMnet" id="Q1W675"/>
<dbReference type="PaxDb" id="9823-ENSSSCP00000014973"/>
<dbReference type="GeneID" id="100144446"/>
<dbReference type="KEGG" id="ssc:100144446"/>
<dbReference type="CTD" id="3156"/>
<dbReference type="eggNOG" id="KOG2480">
    <property type="taxonomic scope" value="Eukaryota"/>
</dbReference>
<dbReference type="InParanoid" id="Q1W675"/>
<dbReference type="OrthoDB" id="310654at2759"/>
<dbReference type="BRENDA" id="1.1.1.34">
    <property type="organism ID" value="6170"/>
</dbReference>
<dbReference type="UniPathway" id="UPA00058">
    <property type="reaction ID" value="UER00103"/>
</dbReference>
<dbReference type="Proteomes" id="UP000008227">
    <property type="component" value="Unplaced"/>
</dbReference>
<dbReference type="Proteomes" id="UP000314985">
    <property type="component" value="Unplaced"/>
</dbReference>
<dbReference type="Proteomes" id="UP000694570">
    <property type="component" value="Unplaced"/>
</dbReference>
<dbReference type="Proteomes" id="UP000694571">
    <property type="component" value="Unplaced"/>
</dbReference>
<dbReference type="Proteomes" id="UP000694720">
    <property type="component" value="Unplaced"/>
</dbReference>
<dbReference type="Proteomes" id="UP000694722">
    <property type="component" value="Unplaced"/>
</dbReference>
<dbReference type="Proteomes" id="UP000694723">
    <property type="component" value="Unplaced"/>
</dbReference>
<dbReference type="Proteomes" id="UP000694724">
    <property type="component" value="Unplaced"/>
</dbReference>
<dbReference type="Proteomes" id="UP000694725">
    <property type="component" value="Unplaced"/>
</dbReference>
<dbReference type="Proteomes" id="UP000694726">
    <property type="component" value="Unplaced"/>
</dbReference>
<dbReference type="Proteomes" id="UP000694727">
    <property type="component" value="Unplaced"/>
</dbReference>
<dbReference type="Proteomes" id="UP000694728">
    <property type="component" value="Unplaced"/>
</dbReference>
<dbReference type="GO" id="GO:0005783">
    <property type="term" value="C:endoplasmic reticulum"/>
    <property type="evidence" value="ECO:0000250"/>
    <property type="project" value="UniProtKB"/>
</dbReference>
<dbReference type="GO" id="GO:0005789">
    <property type="term" value="C:endoplasmic reticulum membrane"/>
    <property type="evidence" value="ECO:0000318"/>
    <property type="project" value="GO_Central"/>
</dbReference>
<dbReference type="GO" id="GO:0005778">
    <property type="term" value="C:peroxisomal membrane"/>
    <property type="evidence" value="ECO:0000250"/>
    <property type="project" value="UniProtKB"/>
</dbReference>
<dbReference type="GO" id="GO:0004420">
    <property type="term" value="F:hydroxymethylglutaryl-CoA reductase (NADPH) activity"/>
    <property type="evidence" value="ECO:0000318"/>
    <property type="project" value="GO_Central"/>
</dbReference>
<dbReference type="GO" id="GO:0050661">
    <property type="term" value="F:NADP binding"/>
    <property type="evidence" value="ECO:0007669"/>
    <property type="project" value="InterPro"/>
</dbReference>
<dbReference type="GO" id="GO:0006695">
    <property type="term" value="P:cholesterol biosynthetic process"/>
    <property type="evidence" value="ECO:0007669"/>
    <property type="project" value="UniProtKB-KW"/>
</dbReference>
<dbReference type="GO" id="GO:0015936">
    <property type="term" value="P:coenzyme A metabolic process"/>
    <property type="evidence" value="ECO:0007669"/>
    <property type="project" value="InterPro"/>
</dbReference>
<dbReference type="GO" id="GO:0008299">
    <property type="term" value="P:isoprenoid biosynthetic process"/>
    <property type="evidence" value="ECO:0000318"/>
    <property type="project" value="GO_Central"/>
</dbReference>
<dbReference type="GO" id="GO:0016126">
    <property type="term" value="P:sterol biosynthetic process"/>
    <property type="evidence" value="ECO:0000318"/>
    <property type="project" value="GO_Central"/>
</dbReference>
<dbReference type="CDD" id="cd00643">
    <property type="entry name" value="HMG-CoA_reductase_classI"/>
    <property type="match status" value="1"/>
</dbReference>
<dbReference type="FunFam" id="1.10.3270.10:FF:000001">
    <property type="entry name" value="3-hydroxy-3-methylglutaryl coenzyme A reductase"/>
    <property type="match status" value="1"/>
</dbReference>
<dbReference type="FunFam" id="3.30.70.420:FF:000001">
    <property type="entry name" value="3-hydroxy-3-methylglutaryl coenzyme A reductase"/>
    <property type="match status" value="1"/>
</dbReference>
<dbReference type="FunFam" id="3.90.770.10:FF:000002">
    <property type="entry name" value="3-hydroxy-3-methylglutaryl coenzyme A reductase"/>
    <property type="match status" value="1"/>
</dbReference>
<dbReference type="Gene3D" id="3.90.770.10">
    <property type="entry name" value="3-hydroxy-3-methylglutaryl-coenzyme A Reductase, Chain A, domain 2"/>
    <property type="match status" value="1"/>
</dbReference>
<dbReference type="Gene3D" id="1.10.3270.10">
    <property type="entry name" value="HMGR, N-terminal domain"/>
    <property type="match status" value="1"/>
</dbReference>
<dbReference type="Gene3D" id="3.30.70.420">
    <property type="entry name" value="Hydroxymethylglutaryl-CoA reductase, class I/II, NAD/NADP-binding domain"/>
    <property type="match status" value="1"/>
</dbReference>
<dbReference type="InterPro" id="IPR002202">
    <property type="entry name" value="HMG_CoA_Rdtase"/>
</dbReference>
<dbReference type="InterPro" id="IPR023074">
    <property type="entry name" value="HMG_CoA_Rdtase_cat_sf"/>
</dbReference>
<dbReference type="InterPro" id="IPR023076">
    <property type="entry name" value="HMG_CoA_Rdtase_CS"/>
</dbReference>
<dbReference type="InterPro" id="IPR004554">
    <property type="entry name" value="HMG_CoA_Rdtase_eu_arc"/>
</dbReference>
<dbReference type="InterPro" id="IPR004816">
    <property type="entry name" value="HMG_CoA_Rdtase_metazoan"/>
</dbReference>
<dbReference type="InterPro" id="IPR023282">
    <property type="entry name" value="HMG_CoA_Rdtase_N"/>
</dbReference>
<dbReference type="InterPro" id="IPR009023">
    <property type="entry name" value="HMG_CoA_Rdtase_NAD(P)-bd_sf"/>
</dbReference>
<dbReference type="InterPro" id="IPR009029">
    <property type="entry name" value="HMG_CoA_Rdtase_sub-bd_dom_sf"/>
</dbReference>
<dbReference type="InterPro" id="IPR053958">
    <property type="entry name" value="HMGCR/SNAP/NPC1-like_SSD"/>
</dbReference>
<dbReference type="InterPro" id="IPR000731">
    <property type="entry name" value="SSD"/>
</dbReference>
<dbReference type="NCBIfam" id="TIGR00920">
    <property type="entry name" value="2A060605"/>
    <property type="match status" value="1"/>
</dbReference>
<dbReference type="NCBIfam" id="TIGR00533">
    <property type="entry name" value="HMG_CoA_R_NADP"/>
    <property type="match status" value="1"/>
</dbReference>
<dbReference type="PANTHER" id="PTHR10572">
    <property type="entry name" value="3-HYDROXY-3-METHYLGLUTARYL-COENZYME A REDUCTASE"/>
    <property type="match status" value="1"/>
</dbReference>
<dbReference type="PANTHER" id="PTHR10572:SF24">
    <property type="entry name" value="3-HYDROXY-3-METHYLGLUTARYL-COENZYME A REDUCTASE"/>
    <property type="match status" value="1"/>
</dbReference>
<dbReference type="Pfam" id="PF00368">
    <property type="entry name" value="HMG-CoA_red"/>
    <property type="match status" value="1"/>
</dbReference>
<dbReference type="Pfam" id="PF12349">
    <property type="entry name" value="Sterol-sensing"/>
    <property type="match status" value="1"/>
</dbReference>
<dbReference type="PRINTS" id="PR00071">
    <property type="entry name" value="HMGCOARDTASE"/>
</dbReference>
<dbReference type="SUPFAM" id="SSF55035">
    <property type="entry name" value="NAD-binding domain of HMG-CoA reductase"/>
    <property type="match status" value="1"/>
</dbReference>
<dbReference type="SUPFAM" id="SSF56542">
    <property type="entry name" value="Substrate-binding domain of HMG-CoA reductase"/>
    <property type="match status" value="1"/>
</dbReference>
<dbReference type="PROSITE" id="PS00066">
    <property type="entry name" value="HMG_COA_REDUCTASE_1"/>
    <property type="match status" value="1"/>
</dbReference>
<dbReference type="PROSITE" id="PS00318">
    <property type="entry name" value="HMG_COA_REDUCTASE_2"/>
    <property type="match status" value="1"/>
</dbReference>
<dbReference type="PROSITE" id="PS01192">
    <property type="entry name" value="HMG_COA_REDUCTASE_3"/>
    <property type="match status" value="1"/>
</dbReference>
<dbReference type="PROSITE" id="PS50065">
    <property type="entry name" value="HMG_COA_REDUCTASE_4"/>
    <property type="match status" value="1"/>
</dbReference>
<dbReference type="PROSITE" id="PS50156">
    <property type="entry name" value="SSD"/>
    <property type="match status" value="1"/>
</dbReference>
<organism>
    <name type="scientific">Sus scrofa</name>
    <name type="common">Pig</name>
    <dbReference type="NCBI Taxonomy" id="9823"/>
    <lineage>
        <taxon>Eukaryota</taxon>
        <taxon>Metazoa</taxon>
        <taxon>Chordata</taxon>
        <taxon>Craniata</taxon>
        <taxon>Vertebrata</taxon>
        <taxon>Euteleostomi</taxon>
        <taxon>Mammalia</taxon>
        <taxon>Eutheria</taxon>
        <taxon>Laurasiatheria</taxon>
        <taxon>Artiodactyla</taxon>
        <taxon>Suina</taxon>
        <taxon>Suidae</taxon>
        <taxon>Sus</taxon>
    </lineage>
</organism>
<name>HMDH_PIG</name>
<gene>
    <name type="primary">HMGCR</name>
    <name type="synonym">HMGR</name>
</gene>
<reference key="1">
    <citation type="journal article" date="2012" name="Gene">
        <title>Molecular cloning, tissue expression and protein structure prediction of the porcine 3-hydroxy-3-methylglutaryl-Coenzyme A reductase (HMGR) gene.</title>
        <authorList>
            <person name="Chen X."/>
            <person name="Wang X."/>
            <person name="Li Z."/>
            <person name="Kong L."/>
            <person name="Liu G."/>
            <person name="Fu J."/>
            <person name="Wang A."/>
        </authorList>
    </citation>
    <scope>NUCLEOTIDE SEQUENCE [MRNA]</scope>
    <scope>TISSUE SPECIFICITY</scope>
    <source>
        <tissue>Liver</tissue>
    </source>
</reference>
<reference key="2">
    <citation type="submission" date="2006-05" db="EMBL/GenBank/DDBJ databases">
        <title>Molecular cloning, expression analysis and chromosomal location of the porcine 3-hydroxy-3-methylglutaryl-coenzyme A reductase (HMGR) gene.</title>
        <authorList>
            <person name="Wang X.F."/>
            <person name="Wang A.G."/>
            <person name="Fu J.L."/>
            <person name="Li Z.J."/>
            <person name="Kong L.J."/>
            <person name="Liu G.F."/>
            <person name="Fang W.N."/>
            <person name="Lu J.H."/>
        </authorList>
    </citation>
    <scope>NUCLEOTIDE SEQUENCE [GENOMIC DNA / MRNA]</scope>
    <source>
        <tissue>Liver</tissue>
    </source>
</reference>
<evidence type="ECO:0000250" key="1">
    <source>
        <dbReference type="UniProtKB" id="P00347"/>
    </source>
</evidence>
<evidence type="ECO:0000250" key="2">
    <source>
        <dbReference type="UniProtKB" id="P04035"/>
    </source>
</evidence>
<evidence type="ECO:0000250" key="3">
    <source>
        <dbReference type="UniProtKB" id="P51639"/>
    </source>
</evidence>
<evidence type="ECO:0000255" key="4"/>
<evidence type="ECO:0000255" key="5">
    <source>
        <dbReference type="PROSITE-ProRule" id="PRU00199"/>
    </source>
</evidence>
<evidence type="ECO:0000255" key="6">
    <source>
        <dbReference type="PROSITE-ProRule" id="PRU10003"/>
    </source>
</evidence>
<evidence type="ECO:0000269" key="7">
    <source>
    </source>
</evidence>
<evidence type="ECO:0000305" key="8"/>
<protein>
    <recommendedName>
        <fullName>3-hydroxy-3-methylglutaryl-coenzyme A reductase</fullName>
        <shortName>HMG-CoA reductase</shortName>
        <ecNumber evidence="2">1.1.1.34</ecNumber>
    </recommendedName>
</protein>